<reference key="1">
    <citation type="journal article" date="2006" name="Proc. Natl. Acad. Sci. U.S.A.">
        <title>The complete genome sequence of Lactobacillus bulgaricus reveals extensive and ongoing reductive evolution.</title>
        <authorList>
            <person name="van de Guchte M."/>
            <person name="Penaud S."/>
            <person name="Grimaldi C."/>
            <person name="Barbe V."/>
            <person name="Bryson K."/>
            <person name="Nicolas P."/>
            <person name="Robert C."/>
            <person name="Oztas S."/>
            <person name="Mangenot S."/>
            <person name="Couloux A."/>
            <person name="Loux V."/>
            <person name="Dervyn R."/>
            <person name="Bossy R."/>
            <person name="Bolotin A."/>
            <person name="Batto J.-M."/>
            <person name="Walunas T."/>
            <person name="Gibrat J.-F."/>
            <person name="Bessieres P."/>
            <person name="Weissenbach J."/>
            <person name="Ehrlich S.D."/>
            <person name="Maguin E."/>
        </authorList>
    </citation>
    <scope>NUCLEOTIDE SEQUENCE [LARGE SCALE GENOMIC DNA]</scope>
    <source>
        <strain>ATCC 11842 / DSM 20081 / BCRC 10696 / JCM 1002 / NBRC 13953 / NCIMB 11778 / NCTC 12712 / WDCM 00102 / Lb 14</strain>
    </source>
</reference>
<comment type="function">
    <text evidence="1">Excises uracil residues from the DNA which can arise as a result of misincorporation of dUMP residues by DNA polymerase or due to deamination of cytosine.</text>
</comment>
<comment type="catalytic activity">
    <reaction evidence="1">
        <text>Hydrolyzes single-stranded DNA or mismatched double-stranded DNA and polynucleotides, releasing free uracil.</text>
        <dbReference type="EC" id="3.2.2.27"/>
    </reaction>
</comment>
<comment type="subcellular location">
    <subcellularLocation>
        <location evidence="1">Cytoplasm</location>
    </subcellularLocation>
</comment>
<comment type="similarity">
    <text evidence="1">Belongs to the uracil-DNA glycosylase (UDG) superfamily. UNG family.</text>
</comment>
<evidence type="ECO:0000255" key="1">
    <source>
        <dbReference type="HAMAP-Rule" id="MF_00148"/>
    </source>
</evidence>
<protein>
    <recommendedName>
        <fullName evidence="1">Uracil-DNA glycosylase</fullName>
        <shortName evidence="1">UDG</shortName>
        <ecNumber evidence="1">3.2.2.27</ecNumber>
    </recommendedName>
</protein>
<feature type="chain" id="PRO_1000009904" description="Uracil-DNA glycosylase">
    <location>
        <begin position="1"/>
        <end position="227"/>
    </location>
</feature>
<feature type="active site" description="Proton acceptor" evidence="1">
    <location>
        <position position="65"/>
    </location>
</feature>
<dbReference type="EC" id="3.2.2.27" evidence="1"/>
<dbReference type="EMBL" id="CR954253">
    <property type="protein sequence ID" value="CAI97471.1"/>
    <property type="molecule type" value="Genomic_DNA"/>
</dbReference>
<dbReference type="RefSeq" id="WP_011543737.1">
    <property type="nucleotide sequence ID" value="NC_008054.1"/>
</dbReference>
<dbReference type="SMR" id="Q1GB22"/>
<dbReference type="STRING" id="390333.Ldb0642"/>
<dbReference type="KEGG" id="ldb:Ldb0642"/>
<dbReference type="eggNOG" id="COG0692">
    <property type="taxonomic scope" value="Bacteria"/>
</dbReference>
<dbReference type="HOGENOM" id="CLU_032162_3_0_9"/>
<dbReference type="BioCyc" id="LDEL390333:LDB_RS02770-MONOMER"/>
<dbReference type="Proteomes" id="UP000001259">
    <property type="component" value="Chromosome"/>
</dbReference>
<dbReference type="GO" id="GO:0005737">
    <property type="term" value="C:cytoplasm"/>
    <property type="evidence" value="ECO:0007669"/>
    <property type="project" value="UniProtKB-SubCell"/>
</dbReference>
<dbReference type="GO" id="GO:0004844">
    <property type="term" value="F:uracil DNA N-glycosylase activity"/>
    <property type="evidence" value="ECO:0007669"/>
    <property type="project" value="UniProtKB-UniRule"/>
</dbReference>
<dbReference type="GO" id="GO:0097510">
    <property type="term" value="P:base-excision repair, AP site formation via deaminated base removal"/>
    <property type="evidence" value="ECO:0007669"/>
    <property type="project" value="TreeGrafter"/>
</dbReference>
<dbReference type="CDD" id="cd10027">
    <property type="entry name" value="UDG-F1-like"/>
    <property type="match status" value="1"/>
</dbReference>
<dbReference type="FunFam" id="3.40.470.10:FF:000001">
    <property type="entry name" value="Uracil-DNA glycosylase"/>
    <property type="match status" value="1"/>
</dbReference>
<dbReference type="Gene3D" id="3.40.470.10">
    <property type="entry name" value="Uracil-DNA glycosylase-like domain"/>
    <property type="match status" value="1"/>
</dbReference>
<dbReference type="HAMAP" id="MF_00148">
    <property type="entry name" value="UDG"/>
    <property type="match status" value="1"/>
</dbReference>
<dbReference type="InterPro" id="IPR002043">
    <property type="entry name" value="UDG_fam1"/>
</dbReference>
<dbReference type="InterPro" id="IPR018085">
    <property type="entry name" value="Ura-DNA_Glyclase_AS"/>
</dbReference>
<dbReference type="InterPro" id="IPR005122">
    <property type="entry name" value="Uracil-DNA_glycosylase-like"/>
</dbReference>
<dbReference type="InterPro" id="IPR036895">
    <property type="entry name" value="Uracil-DNA_glycosylase-like_sf"/>
</dbReference>
<dbReference type="NCBIfam" id="NF003588">
    <property type="entry name" value="PRK05254.1-1"/>
    <property type="match status" value="1"/>
</dbReference>
<dbReference type="NCBIfam" id="NF003589">
    <property type="entry name" value="PRK05254.1-2"/>
    <property type="match status" value="1"/>
</dbReference>
<dbReference type="NCBIfam" id="NF003592">
    <property type="entry name" value="PRK05254.1-5"/>
    <property type="match status" value="1"/>
</dbReference>
<dbReference type="NCBIfam" id="TIGR00628">
    <property type="entry name" value="ung"/>
    <property type="match status" value="1"/>
</dbReference>
<dbReference type="PANTHER" id="PTHR11264">
    <property type="entry name" value="URACIL-DNA GLYCOSYLASE"/>
    <property type="match status" value="1"/>
</dbReference>
<dbReference type="PANTHER" id="PTHR11264:SF0">
    <property type="entry name" value="URACIL-DNA GLYCOSYLASE"/>
    <property type="match status" value="1"/>
</dbReference>
<dbReference type="Pfam" id="PF03167">
    <property type="entry name" value="UDG"/>
    <property type="match status" value="1"/>
</dbReference>
<dbReference type="SMART" id="SM00986">
    <property type="entry name" value="UDG"/>
    <property type="match status" value="1"/>
</dbReference>
<dbReference type="SMART" id="SM00987">
    <property type="entry name" value="UreE_C"/>
    <property type="match status" value="1"/>
</dbReference>
<dbReference type="SUPFAM" id="SSF52141">
    <property type="entry name" value="Uracil-DNA glycosylase-like"/>
    <property type="match status" value="1"/>
</dbReference>
<dbReference type="PROSITE" id="PS00130">
    <property type="entry name" value="U_DNA_GLYCOSYLASE"/>
    <property type="match status" value="1"/>
</dbReference>
<name>UNG_LACDA</name>
<accession>Q1GB22</accession>
<keyword id="KW-0963">Cytoplasm</keyword>
<keyword id="KW-0227">DNA damage</keyword>
<keyword id="KW-0234">DNA repair</keyword>
<keyword id="KW-0378">Hydrolase</keyword>
<keyword id="KW-1185">Reference proteome</keyword>
<sequence>MKHFIGNDWDHVLAPVFESGEYHKLHVFLKKEYQTRQIYPDMYHIFTAFKLTPFKDTKVVILGQDPYHNPSQANGMSFSVMPGTPLPPSLRNIYKELYDDVGAQPVNHGYLKRWADQGVLLLNAVLTVPYGQANGHQGKGWEMVTDAAIKALSERGQVVFILWGRFAQNKIPLIDQDKNVIIKSAHPSPFSANRGFFGSRPFSRCNAALKEFGRAPVDWQLPPNPEA</sequence>
<gene>
    <name evidence="1" type="primary">ung</name>
    <name type="ordered locus">Ldb0642</name>
</gene>
<organism>
    <name type="scientific">Lactobacillus delbrueckii subsp. bulgaricus (strain ATCC 11842 / DSM 20081 / BCRC 10696 / JCM 1002 / NBRC 13953 / NCIMB 11778 / NCTC 12712 / WDCM 00102 / Lb 14)</name>
    <dbReference type="NCBI Taxonomy" id="390333"/>
    <lineage>
        <taxon>Bacteria</taxon>
        <taxon>Bacillati</taxon>
        <taxon>Bacillota</taxon>
        <taxon>Bacilli</taxon>
        <taxon>Lactobacillales</taxon>
        <taxon>Lactobacillaceae</taxon>
        <taxon>Lactobacillus</taxon>
    </lineage>
</organism>
<proteinExistence type="inferred from homology"/>